<gene>
    <name type="primary">POB3</name>
    <name type="ordered locus">CNH02980</name>
</gene>
<comment type="function">
    <text evidence="1">Component of the FACT complex, a general chromatin factor that acts to reorganize nucleosomes. The FACT complex is involved in multiple processes that require DNA as a template such as mRNA elongation, DNA replication and DNA repair. During transcription elongation the FACT complex acts as a histone chaperone that both destabilizes and restores nucleosomal structure. It facilitates the passage of RNA polymerase II and transcription by promoting the dissociation of one histone H2A-H2B dimer from the nucleosome, then subsequently promotes the reestablishment of the nucleosome following the passage of RNA polymerase II (By similarity).</text>
</comment>
<comment type="subunit">
    <text evidence="1">Forms a stable heterodimer with SPT16. The SPT16-POB3 dimer weakly associates with multiple molecules of NHP6 to form the FACT complex (By similarity).</text>
</comment>
<comment type="subcellular location">
    <subcellularLocation>
        <location evidence="1">Nucleus</location>
    </subcellularLocation>
    <subcellularLocation>
        <location evidence="1">Chromosome</location>
    </subcellularLocation>
</comment>
<comment type="miscellaneous">
    <text>In contrast to the orthologous protein in animals and plants, this protein does not contain a HMG box DNA-binding domain. This function may instead be provided by the HMG box of the associated NHP6 protein in the FACT complex of fungi.</text>
</comment>
<comment type="similarity">
    <text evidence="3">Belongs to the SSRP1 family.</text>
</comment>
<sequence>MSTVTFENIFHGDSADLGKLRFNPVGFGWKAYQSEDNNPTTYNGSDIRHATWFRVARHFQLRLGMRNSEKPRISFDGFKRDDLDKIKRTLQEYFNITLETRDTSLKGWNWGEAQVKGSDLVFQVQGKTAFDVPLSQVANSNIAGKYEVALEFNPPSNYKFDPKDLNKRPPDEMVEMRFYIPGKSMKKAGSDAGSGGEETELDEEGNEVSAADAFHSLIKEKADIGAVVGDSIVVFEDCLILTPRGRFSIEVYADSIRLVGKSTDHRVPFTSIHRIFLLPKLDDLHVQLVLGLDPPIRQGATRYPFLVAQWPKDEVVNAELNLTDEELAQYPDLEKTYEATTFQVVSRVLKALTGKKVTPPGSLRNAQGLNGIRANVKAVQGELYFLEKGLIFISKQPILIDFSKTDSISFSRVGGGVASARTFDMRVVSKTGGADHVFSAINKQEVGPISSFLQSKNIRLKNEMEEAIVDIDEPFSDDDEEMESPSEDERPSKAKNDKSKTKPVKKAADDDEDESDDEDFEDESSDGGSPSESDSDDDSGMASDASDPMMEELRKKTQAKRTKAKETSGSGSEDEKPKKKKAKKDDDE</sequence>
<organism>
    <name type="scientific">Cryptococcus neoformans var. neoformans serotype D (strain JEC21 / ATCC MYA-565)</name>
    <name type="common">Filobasidiella neoformans</name>
    <dbReference type="NCBI Taxonomy" id="214684"/>
    <lineage>
        <taxon>Eukaryota</taxon>
        <taxon>Fungi</taxon>
        <taxon>Dikarya</taxon>
        <taxon>Basidiomycota</taxon>
        <taxon>Agaricomycotina</taxon>
        <taxon>Tremellomycetes</taxon>
        <taxon>Tremellales</taxon>
        <taxon>Cryptococcaceae</taxon>
        <taxon>Cryptococcus</taxon>
        <taxon>Cryptococcus neoformans species complex</taxon>
    </lineage>
</organism>
<protein>
    <recommendedName>
        <fullName>FACT complex subunit POB3</fullName>
    </recommendedName>
    <alternativeName>
        <fullName>Facilitates chromatin transcription complex subunit POB3</fullName>
    </alternativeName>
</protein>
<name>POB3_CRYNJ</name>
<feature type="chain" id="PRO_0000245204" description="FACT complex subunit POB3">
    <location>
        <begin position="1"/>
        <end position="588"/>
    </location>
</feature>
<feature type="region of interest" description="Disordered" evidence="2">
    <location>
        <begin position="185"/>
        <end position="205"/>
    </location>
</feature>
<feature type="region of interest" description="Disordered" evidence="2">
    <location>
        <begin position="469"/>
        <end position="588"/>
    </location>
</feature>
<feature type="compositionally biased region" description="Acidic residues" evidence="2">
    <location>
        <begin position="469"/>
        <end position="486"/>
    </location>
</feature>
<feature type="compositionally biased region" description="Basic and acidic residues" evidence="2">
    <location>
        <begin position="487"/>
        <end position="500"/>
    </location>
</feature>
<feature type="compositionally biased region" description="Acidic residues" evidence="2">
    <location>
        <begin position="509"/>
        <end position="525"/>
    </location>
</feature>
<feature type="compositionally biased region" description="Basic and acidic residues" evidence="2">
    <location>
        <begin position="573"/>
        <end position="588"/>
    </location>
</feature>
<evidence type="ECO:0000250" key="1"/>
<evidence type="ECO:0000256" key="2">
    <source>
        <dbReference type="SAM" id="MobiDB-lite"/>
    </source>
</evidence>
<evidence type="ECO:0000305" key="3"/>
<accession>P0CR74</accession>
<accession>Q55IM8</accession>
<accession>Q5KD17</accession>
<reference key="1">
    <citation type="journal article" date="2005" name="Science">
        <title>The genome of the basidiomycetous yeast and human pathogen Cryptococcus neoformans.</title>
        <authorList>
            <person name="Loftus B.J."/>
            <person name="Fung E."/>
            <person name="Roncaglia P."/>
            <person name="Rowley D."/>
            <person name="Amedeo P."/>
            <person name="Bruno D."/>
            <person name="Vamathevan J."/>
            <person name="Miranda M."/>
            <person name="Anderson I.J."/>
            <person name="Fraser J.A."/>
            <person name="Allen J.E."/>
            <person name="Bosdet I.E."/>
            <person name="Brent M.R."/>
            <person name="Chiu R."/>
            <person name="Doering T.L."/>
            <person name="Donlin M.J."/>
            <person name="D'Souza C.A."/>
            <person name="Fox D.S."/>
            <person name="Grinberg V."/>
            <person name="Fu J."/>
            <person name="Fukushima M."/>
            <person name="Haas B.J."/>
            <person name="Huang J.C."/>
            <person name="Janbon G."/>
            <person name="Jones S.J.M."/>
            <person name="Koo H.L."/>
            <person name="Krzywinski M.I."/>
            <person name="Kwon-Chung K.J."/>
            <person name="Lengeler K.B."/>
            <person name="Maiti R."/>
            <person name="Marra M.A."/>
            <person name="Marra R.E."/>
            <person name="Mathewson C.A."/>
            <person name="Mitchell T.G."/>
            <person name="Pertea M."/>
            <person name="Riggs F.R."/>
            <person name="Salzberg S.L."/>
            <person name="Schein J.E."/>
            <person name="Shvartsbeyn A."/>
            <person name="Shin H."/>
            <person name="Shumway M."/>
            <person name="Specht C.A."/>
            <person name="Suh B.B."/>
            <person name="Tenney A."/>
            <person name="Utterback T.R."/>
            <person name="Wickes B.L."/>
            <person name="Wortman J.R."/>
            <person name="Wye N.H."/>
            <person name="Kronstad J.W."/>
            <person name="Lodge J.K."/>
            <person name="Heitman J."/>
            <person name="Davis R.W."/>
            <person name="Fraser C.M."/>
            <person name="Hyman R.W."/>
        </authorList>
    </citation>
    <scope>NUCLEOTIDE SEQUENCE [LARGE SCALE GENOMIC DNA]</scope>
    <source>
        <strain>JEC21 / ATCC MYA-565</strain>
    </source>
</reference>
<proteinExistence type="inferred from homology"/>
<dbReference type="EMBL" id="AE017348">
    <property type="protein sequence ID" value="AAW45161.1"/>
    <property type="molecule type" value="Genomic_DNA"/>
</dbReference>
<dbReference type="RefSeq" id="XP_572468.1">
    <property type="nucleotide sequence ID" value="XM_572468.1"/>
</dbReference>
<dbReference type="SMR" id="P0CR74"/>
<dbReference type="FunCoup" id="P0CR74">
    <property type="interactions" value="719"/>
</dbReference>
<dbReference type="STRING" id="214684.P0CR74"/>
<dbReference type="PaxDb" id="214684-P0CR74"/>
<dbReference type="EnsemblFungi" id="AAW45161">
    <property type="protein sequence ID" value="AAW45161"/>
    <property type="gene ID" value="CNH02980"/>
</dbReference>
<dbReference type="GeneID" id="3259295"/>
<dbReference type="KEGG" id="cne:CNH02980"/>
<dbReference type="VEuPathDB" id="FungiDB:CNH02980"/>
<dbReference type="eggNOG" id="KOG0526">
    <property type="taxonomic scope" value="Eukaryota"/>
</dbReference>
<dbReference type="HOGENOM" id="CLU_017374_3_0_1"/>
<dbReference type="InParanoid" id="P0CR74"/>
<dbReference type="OMA" id="QVVTKIF"/>
<dbReference type="OrthoDB" id="498543at2759"/>
<dbReference type="Proteomes" id="UP000002149">
    <property type="component" value="Chromosome 8"/>
</dbReference>
<dbReference type="GO" id="GO:0000781">
    <property type="term" value="C:chromosome, telomeric region"/>
    <property type="evidence" value="ECO:0007669"/>
    <property type="project" value="GOC"/>
</dbReference>
<dbReference type="GO" id="GO:0035101">
    <property type="term" value="C:FACT complex"/>
    <property type="evidence" value="ECO:0000318"/>
    <property type="project" value="GO_Central"/>
</dbReference>
<dbReference type="GO" id="GO:0003677">
    <property type="term" value="F:DNA binding"/>
    <property type="evidence" value="ECO:0007669"/>
    <property type="project" value="InterPro"/>
</dbReference>
<dbReference type="GO" id="GO:0042393">
    <property type="term" value="F:histone binding"/>
    <property type="evidence" value="ECO:0000318"/>
    <property type="project" value="GO_Central"/>
</dbReference>
<dbReference type="GO" id="GO:0031491">
    <property type="term" value="F:nucleosome binding"/>
    <property type="evidence" value="ECO:0000318"/>
    <property type="project" value="GO_Central"/>
</dbReference>
<dbReference type="GO" id="GO:0006281">
    <property type="term" value="P:DNA repair"/>
    <property type="evidence" value="ECO:0007669"/>
    <property type="project" value="UniProtKB-KW"/>
</dbReference>
<dbReference type="GO" id="GO:0006335">
    <property type="term" value="P:DNA replication-dependent chromatin assembly"/>
    <property type="evidence" value="ECO:0007669"/>
    <property type="project" value="EnsemblFungi"/>
</dbReference>
<dbReference type="GO" id="GO:0006261">
    <property type="term" value="P:DNA-templated DNA replication"/>
    <property type="evidence" value="ECO:0007669"/>
    <property type="project" value="EnsemblFungi"/>
</dbReference>
<dbReference type="GO" id="GO:0034728">
    <property type="term" value="P:nucleosome organization"/>
    <property type="evidence" value="ECO:0007669"/>
    <property type="project" value="EnsemblFungi"/>
</dbReference>
<dbReference type="GO" id="GO:0031508">
    <property type="term" value="P:pericentric heterochromatin formation"/>
    <property type="evidence" value="ECO:0007669"/>
    <property type="project" value="EnsemblFungi"/>
</dbReference>
<dbReference type="GO" id="GO:0045899">
    <property type="term" value="P:positive regulation of RNA polymerase II transcription preinitiation complex assembly"/>
    <property type="evidence" value="ECO:0007669"/>
    <property type="project" value="EnsemblFungi"/>
</dbReference>
<dbReference type="GO" id="GO:0030466">
    <property type="term" value="P:silent mating-type cassette heterochromatin formation"/>
    <property type="evidence" value="ECO:0007669"/>
    <property type="project" value="EnsemblFungi"/>
</dbReference>
<dbReference type="GO" id="GO:0031509">
    <property type="term" value="P:subtelomeric heterochromatin formation"/>
    <property type="evidence" value="ECO:0007669"/>
    <property type="project" value="EnsemblFungi"/>
</dbReference>
<dbReference type="CDD" id="cd13230">
    <property type="entry name" value="PH1_SSRP1-like"/>
    <property type="match status" value="1"/>
</dbReference>
<dbReference type="CDD" id="cd13231">
    <property type="entry name" value="PH2_SSRP1-like"/>
    <property type="match status" value="1"/>
</dbReference>
<dbReference type="FunFam" id="2.30.29.220:FF:000003">
    <property type="entry name" value="FACT complex subunit POB3"/>
    <property type="match status" value="1"/>
</dbReference>
<dbReference type="FunFam" id="2.30.29.30:FF:000481">
    <property type="entry name" value="FACT complex subunit POB3"/>
    <property type="match status" value="1"/>
</dbReference>
<dbReference type="FunFam" id="2.30.29.30:FF:000119">
    <property type="entry name" value="FACT complex subunit SSRP1"/>
    <property type="match status" value="1"/>
</dbReference>
<dbReference type="FunFam" id="2.30.29.150:FF:000001">
    <property type="entry name" value="Fact complex subunit ssrp1"/>
    <property type="match status" value="1"/>
</dbReference>
<dbReference type="Gene3D" id="2.30.29.150">
    <property type="match status" value="1"/>
</dbReference>
<dbReference type="Gene3D" id="2.30.29.30">
    <property type="entry name" value="Pleckstrin-homology domain (PH domain)/Phosphotyrosine-binding domain (PTB)"/>
    <property type="match status" value="2"/>
</dbReference>
<dbReference type="Gene3D" id="2.30.29.220">
    <property type="entry name" value="Structure-specific recognition protein (SSRP1)"/>
    <property type="match status" value="1"/>
</dbReference>
<dbReference type="InterPro" id="IPR011993">
    <property type="entry name" value="PH-like_dom_sf"/>
</dbReference>
<dbReference type="InterPro" id="IPR013719">
    <property type="entry name" value="RTT106/SPT16-like_middle_dom"/>
</dbReference>
<dbReference type="InterPro" id="IPR050454">
    <property type="entry name" value="RTT106/SSRP1_HistChap/FACT"/>
</dbReference>
<dbReference type="InterPro" id="IPR048993">
    <property type="entry name" value="SSRP1-like_PH1"/>
</dbReference>
<dbReference type="InterPro" id="IPR000969">
    <property type="entry name" value="SSRP1/POB3"/>
</dbReference>
<dbReference type="InterPro" id="IPR035417">
    <property type="entry name" value="SSRP1/POB3_N"/>
</dbReference>
<dbReference type="InterPro" id="IPR024954">
    <property type="entry name" value="SSRP1_DD"/>
</dbReference>
<dbReference type="InterPro" id="IPR038167">
    <property type="entry name" value="SSRP1_sf"/>
</dbReference>
<dbReference type="PANTHER" id="PTHR45849">
    <property type="entry name" value="FACT COMPLEX SUBUNIT SSRP1"/>
    <property type="match status" value="1"/>
</dbReference>
<dbReference type="PANTHER" id="PTHR45849:SF1">
    <property type="entry name" value="FACT COMPLEX SUBUNIT SSRP1"/>
    <property type="match status" value="1"/>
</dbReference>
<dbReference type="Pfam" id="PF21103">
    <property type="entry name" value="PH1_SSRP1-like"/>
    <property type="match status" value="1"/>
</dbReference>
<dbReference type="Pfam" id="PF17292">
    <property type="entry name" value="POB3_N"/>
    <property type="match status" value="1"/>
</dbReference>
<dbReference type="Pfam" id="PF08512">
    <property type="entry name" value="Rttp106-like_middle"/>
    <property type="match status" value="1"/>
</dbReference>
<dbReference type="Pfam" id="PF03531">
    <property type="entry name" value="SSrecog"/>
    <property type="match status" value="1"/>
</dbReference>
<dbReference type="PRINTS" id="PR00887">
    <property type="entry name" value="SSRCOGNITION"/>
</dbReference>
<dbReference type="SMART" id="SM01287">
    <property type="entry name" value="Rtt106"/>
    <property type="match status" value="1"/>
</dbReference>
<dbReference type="SUPFAM" id="SSF50729">
    <property type="entry name" value="PH domain-like"/>
    <property type="match status" value="1"/>
</dbReference>
<keyword id="KW-0158">Chromosome</keyword>
<keyword id="KW-0227">DNA damage</keyword>
<keyword id="KW-0234">DNA repair</keyword>
<keyword id="KW-0235">DNA replication</keyword>
<keyword id="KW-0539">Nucleus</keyword>
<keyword id="KW-1185">Reference proteome</keyword>
<keyword id="KW-0804">Transcription</keyword>
<keyword id="KW-0805">Transcription regulation</keyword>